<organism>
    <name type="scientific">Sus scrofa</name>
    <name type="common">Pig</name>
    <dbReference type="NCBI Taxonomy" id="9823"/>
    <lineage>
        <taxon>Eukaryota</taxon>
        <taxon>Metazoa</taxon>
        <taxon>Chordata</taxon>
        <taxon>Craniata</taxon>
        <taxon>Vertebrata</taxon>
        <taxon>Euteleostomi</taxon>
        <taxon>Mammalia</taxon>
        <taxon>Eutheria</taxon>
        <taxon>Laurasiatheria</taxon>
        <taxon>Artiodactyla</taxon>
        <taxon>Suina</taxon>
        <taxon>Suidae</taxon>
        <taxon>Sus</taxon>
    </lineage>
</organism>
<proteinExistence type="inferred from homology"/>
<protein>
    <recommendedName>
        <fullName>Small ubiquitin-related modifier 1</fullName>
        <shortName>SUMO-1</shortName>
    </recommendedName>
</protein>
<sequence length="101" mass="11557">MSDQEAKPSTEDLGDKKEGEYIKLKVIGQDSSEIHFKVKMTTHLKKLKESYCQRQGVPMNSLRFLFEGQRIADNHTPKELGMEEEDVIEVYQEQTGGHSTV</sequence>
<name>SUMO1_PIG</name>
<keyword id="KW-0007">Acetylation</keyword>
<keyword id="KW-1003">Cell membrane</keyword>
<keyword id="KW-0963">Cytoplasm</keyword>
<keyword id="KW-1017">Isopeptide bond</keyword>
<keyword id="KW-0472">Membrane</keyword>
<keyword id="KW-0539">Nucleus</keyword>
<keyword id="KW-0597">Phosphoprotein</keyword>
<keyword id="KW-1185">Reference proteome</keyword>
<keyword id="KW-0832">Ubl conjugation</keyword>
<keyword id="KW-0833">Ubl conjugation pathway</keyword>
<gene>
    <name type="primary">SUMO1</name>
</gene>
<accession>A7WLH8</accession>
<feature type="initiator methionine" description="Removed" evidence="2">
    <location>
        <position position="1"/>
    </location>
</feature>
<feature type="chain" id="PRO_0000311795" description="Small ubiquitin-related modifier 1">
    <location>
        <begin position="2"/>
        <end position="97"/>
    </location>
</feature>
<feature type="propeptide" id="PRO_0000311796" evidence="1">
    <location>
        <begin position="98"/>
        <end position="101"/>
    </location>
</feature>
<feature type="domain" description="Ubiquitin-like" evidence="4">
    <location>
        <begin position="20"/>
        <end position="97"/>
    </location>
</feature>
<feature type="site" description="Interaction with PIAS2" evidence="1">
    <location>
        <position position="36"/>
    </location>
</feature>
<feature type="modified residue" description="N-acetylserine" evidence="2">
    <location>
        <position position="2"/>
    </location>
</feature>
<feature type="modified residue" description="Phosphoserine" evidence="2">
    <location>
        <position position="2"/>
    </location>
</feature>
<feature type="modified residue" description="Phosphoserine" evidence="2">
    <location>
        <position position="9"/>
    </location>
</feature>
<feature type="modified residue" description="Phosphoserine" evidence="2">
    <location>
        <position position="32"/>
    </location>
</feature>
<feature type="cross-link" description="Glycyl lysine isopeptide (Lys-Gly) (interchain with G-Cter in SUMO1); alternate" evidence="2">
    <location>
        <position position="7"/>
    </location>
</feature>
<feature type="cross-link" description="Glycyl lysine isopeptide (Lys-Gly) (interchain with G-Cter in SUMO2); alternate" evidence="2">
    <location>
        <position position="7"/>
    </location>
</feature>
<feature type="cross-link" description="Glycyl lysine isopeptide (Lys-Gly) (interchain with G-Cter in SUMO2)" evidence="2">
    <location>
        <position position="16"/>
    </location>
</feature>
<feature type="cross-link" description="Glycyl lysine isopeptide (Lys-Gly) (interchain with G-Cter in SUMO2)" evidence="2">
    <location>
        <position position="17"/>
    </location>
</feature>
<feature type="cross-link" description="Glycyl lysine isopeptide (Lys-Gly) (interchain with G-Cter in SUMO2)" evidence="2">
    <location>
        <position position="23"/>
    </location>
</feature>
<feature type="cross-link" description="Glycyl lysine isopeptide (Lys-Gly) (interchain with G-Cter in SUMO1)" evidence="2">
    <location>
        <position position="25"/>
    </location>
</feature>
<feature type="cross-link" description="Glycyl lysine isopeptide (Lys-Gly) (interchain with G-Cter in SUMO2)" evidence="2">
    <location>
        <position position="37"/>
    </location>
</feature>
<feature type="cross-link" description="Glycyl lysine isopeptide (Lys-Gly) (interchain with G-Cter in SUMO2)" evidence="2">
    <location>
        <position position="39"/>
    </location>
</feature>
<feature type="cross-link" description="Glycyl lysine isopeptide (Lys-Gly) (interchain with G-Cter in SUMO2)" evidence="2">
    <location>
        <position position="45"/>
    </location>
</feature>
<feature type="cross-link" description="Glycyl lysine isopeptide (Lys-Gly) (interchain with G-Cter in SUMO2)" evidence="2">
    <location>
        <position position="46"/>
    </location>
</feature>
<feature type="cross-link" description="Glycyl lysine isopeptide (Gly-Lys) (interchain with K-? in acceptor proteins)" evidence="4">
    <location>
        <position position="97"/>
    </location>
</feature>
<reference key="1">
    <citation type="submission" date="2006-08" db="EMBL/GenBank/DDBJ databases">
        <title>Molecular cloning and expression analysis of porcine SUMO genes.</title>
        <authorList>
            <person name="Chun T."/>
            <person name="Lee J.Y."/>
        </authorList>
    </citation>
    <scope>NUCLEOTIDE SEQUENCE [MRNA]</scope>
</reference>
<dbReference type="EMBL" id="AM397625">
    <property type="protein sequence ID" value="CAL37096.1"/>
    <property type="molecule type" value="mRNA"/>
</dbReference>
<dbReference type="RefSeq" id="NP_001106146.1">
    <property type="nucleotide sequence ID" value="NM_001112676.1"/>
</dbReference>
<dbReference type="RefSeq" id="XP_013839843.1">
    <property type="nucleotide sequence ID" value="XM_013984389.1"/>
</dbReference>
<dbReference type="BMRB" id="A7WLH8"/>
<dbReference type="SMR" id="A7WLH8"/>
<dbReference type="FunCoup" id="A7WLH8">
    <property type="interactions" value="1664"/>
</dbReference>
<dbReference type="IntAct" id="A7WLH8">
    <property type="interactions" value="1"/>
</dbReference>
<dbReference type="STRING" id="9823.ENSSSCP00000057158"/>
<dbReference type="PaxDb" id="9823-ENSSSCP00000004901"/>
<dbReference type="PeptideAtlas" id="A7WLH8"/>
<dbReference type="Ensembl" id="ENSSSCT00000047478.3">
    <property type="protein sequence ID" value="ENSSSCP00000050479.1"/>
    <property type="gene ID" value="ENSSSCG00000035842.3"/>
</dbReference>
<dbReference type="Ensembl" id="ENSSSCT00015092708.1">
    <property type="protein sequence ID" value="ENSSSCP00015037905.1"/>
    <property type="gene ID" value="ENSSSCG00015069022.1"/>
</dbReference>
<dbReference type="Ensembl" id="ENSSSCT00015092903.1">
    <property type="protein sequence ID" value="ENSSSCP00015037999.1"/>
    <property type="gene ID" value="ENSSSCG00015069022.1"/>
</dbReference>
<dbReference type="Ensembl" id="ENSSSCT00035035330.1">
    <property type="protein sequence ID" value="ENSSSCP00035014013.1"/>
    <property type="gene ID" value="ENSSSCG00035026757.1"/>
</dbReference>
<dbReference type="Ensembl" id="ENSSSCT00045057043.1">
    <property type="protein sequence ID" value="ENSSSCP00045039856.1"/>
    <property type="gene ID" value="ENSSSCG00045033283.1"/>
</dbReference>
<dbReference type="Ensembl" id="ENSSSCT00055031609.1">
    <property type="protein sequence ID" value="ENSSSCP00055025157.1"/>
    <property type="gene ID" value="ENSSSCG00055015978.1"/>
</dbReference>
<dbReference type="Ensembl" id="ENSSSCT00060099874.1">
    <property type="protein sequence ID" value="ENSSSCP00060043330.1"/>
    <property type="gene ID" value="ENSSSCG00060072987.1"/>
</dbReference>
<dbReference type="Ensembl" id="ENSSSCT00065019353.1">
    <property type="protein sequence ID" value="ENSSSCP00065007935.1"/>
    <property type="gene ID" value="ENSSSCG00065014528.1"/>
</dbReference>
<dbReference type="Ensembl" id="ENSSSCT00070045051.1">
    <property type="protein sequence ID" value="ENSSSCP00070037952.1"/>
    <property type="gene ID" value="ENSSSCG00070022655.1"/>
</dbReference>
<dbReference type="Ensembl" id="ENSSSCT00115003449">
    <property type="protein sequence ID" value="ENSSSCP00115003167"/>
    <property type="gene ID" value="ENSSSCG00115002072"/>
</dbReference>
<dbReference type="GeneID" id="100127139"/>
<dbReference type="KEGG" id="ssc:100127139"/>
<dbReference type="CTD" id="7341"/>
<dbReference type="eggNOG" id="KOG1769">
    <property type="taxonomic scope" value="Eukaryota"/>
</dbReference>
<dbReference type="GeneTree" id="ENSGT00940000154319"/>
<dbReference type="InParanoid" id="A7WLH8"/>
<dbReference type="OMA" id="DQSHAAR"/>
<dbReference type="OrthoDB" id="442921at2759"/>
<dbReference type="Reactome" id="R-SSC-3065676">
    <property type="pathway name" value="SUMO is conjugated to E1 (UBA2:SAE1)"/>
</dbReference>
<dbReference type="Reactome" id="R-SSC-3065678">
    <property type="pathway name" value="SUMO is transferred from E1 to E2 (UBE2I, UBC9)"/>
</dbReference>
<dbReference type="Reactome" id="R-SSC-3065679">
    <property type="pathway name" value="SUMO is proteolytically processed"/>
</dbReference>
<dbReference type="Reactome" id="R-SSC-3108214">
    <property type="pathway name" value="SUMOylation of DNA damage response and repair proteins"/>
</dbReference>
<dbReference type="Reactome" id="R-SSC-3232118">
    <property type="pathway name" value="SUMOylation of transcription factors"/>
</dbReference>
<dbReference type="Reactome" id="R-SSC-3232142">
    <property type="pathway name" value="SUMOylation of ubiquitinylation proteins"/>
</dbReference>
<dbReference type="Reactome" id="R-SSC-3899300">
    <property type="pathway name" value="SUMOylation of transcription cofactors"/>
</dbReference>
<dbReference type="Reactome" id="R-SSC-4085377">
    <property type="pathway name" value="SUMOylation of SUMOylation proteins"/>
</dbReference>
<dbReference type="Reactome" id="R-SSC-4090294">
    <property type="pathway name" value="SUMOylation of intracellular receptors"/>
</dbReference>
<dbReference type="Reactome" id="R-SSC-4551638">
    <property type="pathway name" value="SUMOylation of chromatin organization proteins"/>
</dbReference>
<dbReference type="Reactome" id="R-SSC-4570464">
    <property type="pathway name" value="SUMOylation of RNA binding proteins"/>
</dbReference>
<dbReference type="Reactome" id="R-SSC-4615885">
    <property type="pathway name" value="SUMOylation of DNA replication proteins"/>
</dbReference>
<dbReference type="Reactome" id="R-SSC-4655427">
    <property type="pathway name" value="SUMOylation of DNA methylation proteins"/>
</dbReference>
<dbReference type="Reactome" id="R-SSC-4755510">
    <property type="pathway name" value="SUMOylation of immune response proteins"/>
</dbReference>
<dbReference type="Reactome" id="R-SSC-5693565">
    <property type="pathway name" value="Recruitment and ATM-mediated phosphorylation of repair and signaling proteins at DNA double strand breaks"/>
</dbReference>
<dbReference type="Reactome" id="R-SSC-5696395">
    <property type="pathway name" value="Formation of Incision Complex in GG-NER"/>
</dbReference>
<dbReference type="Reactome" id="R-SSC-877312">
    <property type="pathway name" value="Regulation of IFNG signaling"/>
</dbReference>
<dbReference type="Reactome" id="R-SSC-8866904">
    <property type="pathway name" value="Negative regulation of activity of TFAP2 (AP-2) family transcription factors"/>
</dbReference>
<dbReference type="Reactome" id="R-SSC-9615933">
    <property type="pathway name" value="Postmitotic nuclear pore complex (NPC) reformation"/>
</dbReference>
<dbReference type="Reactome" id="R-SSC-9793242">
    <property type="pathway name" value="SUMOylation of nuclear envelope proteins"/>
</dbReference>
<dbReference type="Reactome" id="R-SSC-9856649">
    <property type="pathway name" value="Transcriptional and post-translational regulation of MITF-M expression and activity"/>
</dbReference>
<dbReference type="Proteomes" id="UP000008227">
    <property type="component" value="Chromosome 15"/>
</dbReference>
<dbReference type="Proteomes" id="UP000314985">
    <property type="component" value="Chromosome 15"/>
</dbReference>
<dbReference type="Proteomes" id="UP000694570">
    <property type="component" value="Unplaced"/>
</dbReference>
<dbReference type="Proteomes" id="UP000694571">
    <property type="component" value="Unplaced"/>
</dbReference>
<dbReference type="Proteomes" id="UP000694720">
    <property type="component" value="Unplaced"/>
</dbReference>
<dbReference type="Proteomes" id="UP000694722">
    <property type="component" value="Unplaced"/>
</dbReference>
<dbReference type="Proteomes" id="UP000694723">
    <property type="component" value="Unplaced"/>
</dbReference>
<dbReference type="Proteomes" id="UP000694724">
    <property type="component" value="Unplaced"/>
</dbReference>
<dbReference type="Proteomes" id="UP000694725">
    <property type="component" value="Unplaced"/>
</dbReference>
<dbReference type="Proteomes" id="UP000694726">
    <property type="component" value="Unplaced"/>
</dbReference>
<dbReference type="Proteomes" id="UP000694727">
    <property type="component" value="Unplaced"/>
</dbReference>
<dbReference type="Proteomes" id="UP000694728">
    <property type="component" value="Unplaced"/>
</dbReference>
<dbReference type="Bgee" id="ENSSSCG00000035842">
    <property type="expression patterns" value="Expressed in hindlimb bud and 44 other cell types or tissues"/>
</dbReference>
<dbReference type="ExpressionAtlas" id="A7WLH8">
    <property type="expression patterns" value="baseline and differential"/>
</dbReference>
<dbReference type="GO" id="GO:0005737">
    <property type="term" value="C:cytoplasm"/>
    <property type="evidence" value="ECO:0007669"/>
    <property type="project" value="UniProtKB-SubCell"/>
</dbReference>
<dbReference type="GO" id="GO:0031965">
    <property type="term" value="C:nuclear membrane"/>
    <property type="evidence" value="ECO:0007669"/>
    <property type="project" value="UniProtKB-SubCell"/>
</dbReference>
<dbReference type="GO" id="GO:0016607">
    <property type="term" value="C:nuclear speck"/>
    <property type="evidence" value="ECO:0007669"/>
    <property type="project" value="UniProtKB-SubCell"/>
</dbReference>
<dbReference type="GO" id="GO:0097165">
    <property type="term" value="C:nuclear stress granule"/>
    <property type="evidence" value="ECO:0000250"/>
    <property type="project" value="UniProtKB"/>
</dbReference>
<dbReference type="GO" id="GO:0005634">
    <property type="term" value="C:nucleus"/>
    <property type="evidence" value="ECO:0000318"/>
    <property type="project" value="GO_Central"/>
</dbReference>
<dbReference type="GO" id="GO:0005886">
    <property type="term" value="C:plasma membrane"/>
    <property type="evidence" value="ECO:0000250"/>
    <property type="project" value="UniProtKB"/>
</dbReference>
<dbReference type="GO" id="GO:0016605">
    <property type="term" value="C:PML body"/>
    <property type="evidence" value="ECO:0000250"/>
    <property type="project" value="UniProtKB"/>
</dbReference>
<dbReference type="GO" id="GO:0015459">
    <property type="term" value="F:potassium channel regulator activity"/>
    <property type="evidence" value="ECO:0000250"/>
    <property type="project" value="UniProtKB"/>
</dbReference>
<dbReference type="GO" id="GO:0031386">
    <property type="term" value="F:protein tag activity"/>
    <property type="evidence" value="ECO:0000318"/>
    <property type="project" value="GO_Central"/>
</dbReference>
<dbReference type="GO" id="GO:0008134">
    <property type="term" value="F:transcription factor binding"/>
    <property type="evidence" value="ECO:0000250"/>
    <property type="project" value="AgBase"/>
</dbReference>
<dbReference type="GO" id="GO:0031625">
    <property type="term" value="F:ubiquitin protein ligase binding"/>
    <property type="evidence" value="ECO:0000250"/>
    <property type="project" value="UniProtKB"/>
</dbReference>
<dbReference type="GO" id="GO:0044389">
    <property type="term" value="F:ubiquitin-like protein ligase binding"/>
    <property type="evidence" value="ECO:0000318"/>
    <property type="project" value="GO_Central"/>
</dbReference>
<dbReference type="GO" id="GO:0071276">
    <property type="term" value="P:cellular response to cadmium ion"/>
    <property type="evidence" value="ECO:0000250"/>
    <property type="project" value="UniProtKB"/>
</dbReference>
<dbReference type="GO" id="GO:0034605">
    <property type="term" value="P:cellular response to heat"/>
    <property type="evidence" value="ECO:0000250"/>
    <property type="project" value="UniProtKB"/>
</dbReference>
<dbReference type="GO" id="GO:0045759">
    <property type="term" value="P:negative regulation of action potential"/>
    <property type="evidence" value="ECO:0000250"/>
    <property type="project" value="UniProtKB"/>
</dbReference>
<dbReference type="GO" id="GO:1902260">
    <property type="term" value="P:negative regulation of delayed rectifier potassium channel activity"/>
    <property type="evidence" value="ECO:0000250"/>
    <property type="project" value="UniProtKB"/>
</dbReference>
<dbReference type="GO" id="GO:0016925">
    <property type="term" value="P:protein sumoylation"/>
    <property type="evidence" value="ECO:0000250"/>
    <property type="project" value="UniProtKB"/>
</dbReference>
<dbReference type="GO" id="GO:0060021">
    <property type="term" value="P:roof of mouth development"/>
    <property type="evidence" value="ECO:0000250"/>
    <property type="project" value="UniProtKB"/>
</dbReference>
<dbReference type="CDD" id="cd16114">
    <property type="entry name" value="Ubl_SUMO1"/>
    <property type="match status" value="1"/>
</dbReference>
<dbReference type="FunFam" id="3.10.20.90:FF:000092">
    <property type="entry name" value="Small ubiquitin-related modifier"/>
    <property type="match status" value="1"/>
</dbReference>
<dbReference type="Gene3D" id="3.10.20.90">
    <property type="entry name" value="Phosphatidylinositol 3-kinase Catalytic Subunit, Chain A, domain 1"/>
    <property type="match status" value="1"/>
</dbReference>
<dbReference type="InterPro" id="IPR022617">
    <property type="entry name" value="Rad60/SUMO-like_dom"/>
</dbReference>
<dbReference type="InterPro" id="IPR046332">
    <property type="entry name" value="SUMO1_Ubl"/>
</dbReference>
<dbReference type="InterPro" id="IPR000626">
    <property type="entry name" value="Ubiquitin-like_dom"/>
</dbReference>
<dbReference type="InterPro" id="IPR029071">
    <property type="entry name" value="Ubiquitin-like_domsf"/>
</dbReference>
<dbReference type="PANTHER" id="PTHR10562">
    <property type="entry name" value="SMALL UBIQUITIN-RELATED MODIFIER"/>
    <property type="match status" value="1"/>
</dbReference>
<dbReference type="Pfam" id="PF11976">
    <property type="entry name" value="Rad60-SLD"/>
    <property type="match status" value="1"/>
</dbReference>
<dbReference type="SMART" id="SM00213">
    <property type="entry name" value="UBQ"/>
    <property type="match status" value="1"/>
</dbReference>
<dbReference type="SUPFAM" id="SSF54236">
    <property type="entry name" value="Ubiquitin-like"/>
    <property type="match status" value="1"/>
</dbReference>
<dbReference type="PROSITE" id="PS50053">
    <property type="entry name" value="UBIQUITIN_2"/>
    <property type="match status" value="1"/>
</dbReference>
<evidence type="ECO:0000250" key="1"/>
<evidence type="ECO:0000250" key="2">
    <source>
        <dbReference type="UniProtKB" id="P63165"/>
    </source>
</evidence>
<evidence type="ECO:0000250" key="3">
    <source>
        <dbReference type="UniProtKB" id="P63166"/>
    </source>
</evidence>
<evidence type="ECO:0000255" key="4">
    <source>
        <dbReference type="PROSITE-ProRule" id="PRU00214"/>
    </source>
</evidence>
<evidence type="ECO:0000305" key="5"/>
<comment type="function">
    <text evidence="2 3">Ubiquitin-like protein that can be covalently attached to proteins as a monomer or a lysine-linked polymer. Covalent attachment via an isopeptide bond to its substrates requires prior activation by the E1 complex SAE1-SAE2 and linkage to the E2 enzyme UBE2I, and can be promoted by E3 ligases such as PIAS1-4, RANBP2 or CBX4. This post-translational modification on lysine residues of proteins plays a crucial role in a number of cellular processes such as nuclear transport, DNA replication and repair, mitosis and signal transduction. Involved for instance in targeting RANGAP1 to the nuclear pore complex protein RANBP2. Covalently attached to the voltage-gated potassium channel KCNB1; this modulates the gating characteristics of KCNB1. Polymeric SUMO1 chains are also susceptible to polyubiquitination which functions as a signal for proteasomal degradation of modified proteins. May also regulate a network of genes involved in palate development. Covalently attached to ZFHX3.</text>
</comment>
<comment type="subunit">
    <text evidence="2 3">Covalently attached to KCNB1; UBE2I increases cross-linking with KCNB1 and PIAS1 decreases cross-links with KCNB1 (By similarity). Interacts with SAE2, RANBP2, PIAS1 and PIAS2 (By similarity). Interacts with PRKN (By similarity). Covalently attached to a number of proteins such as IKFZ1, PML, RANGAP1, HIPK2, SP100, p53, p73-alpha, MDM2, JUN, DNMT3B and TDG (By similarity). Also interacts with HIF1A, HIPK2, HIPK3, CHD3, EXOSC9, RAD51 and RAD52 (By similarity). Interacts with USP25 (via ts SIM domain); the interaction weakly sumoylates USP25 (By similarity). Interacts with SIMC1, CASP8AP2, RNF111 and SOBP (via SIM domains) (By similarity). Interacts with BHLHE40/DEC1 (By similarity). Interacts with RWDD3 (By similarity). Interacts with UBE2I/UBC9 and this interaction is enhanced in the presence of RWDD3 (By similarity). Interacts with MTA1 (By similarity). Interacts with SENP2 (By similarity). Interacts with HINT1 (By similarity).</text>
</comment>
<comment type="subcellular location">
    <subcellularLocation>
        <location evidence="2">Nucleus membrane</location>
    </subcellularLocation>
    <subcellularLocation>
        <location evidence="3">Nucleus speckle</location>
    </subcellularLocation>
    <subcellularLocation>
        <location evidence="2">Cytoplasm</location>
    </subcellularLocation>
    <subcellularLocation>
        <location evidence="2">Nucleus</location>
        <location evidence="2">PML body</location>
    </subcellularLocation>
    <subcellularLocation>
        <location evidence="2">Cell membrane</location>
    </subcellularLocation>
    <subcellularLocation>
        <location evidence="2">Nucleus</location>
    </subcellularLocation>
    <text evidence="2 3">Recruited by BCL11A into the nuclear body (By similarity). In the presence of ZFHX3, sequesterd to nuclear body (NB)-like dots in the nucleus some of which overlap or closely associate with PML body (By similarity).</text>
</comment>
<comment type="PTM">
    <text evidence="2">Cleavage of precursor form by SENP1 or SENP2 is necessary for function.</text>
</comment>
<comment type="PTM">
    <text evidence="2">Polymeric SUMO1 chains undergo polyubiquitination by RNF4.</text>
</comment>
<comment type="similarity">
    <text evidence="5">Belongs to the ubiquitin family. SUMO subfamily.</text>
</comment>